<reference key="1">
    <citation type="journal article" date="2006" name="Proc. Natl. Acad. Sci. U.S.A.">
        <title>Genome sequence of Synechococcus CC9311: insights into adaptation to a coastal environment.</title>
        <authorList>
            <person name="Palenik B."/>
            <person name="Ren Q."/>
            <person name="Dupont C.L."/>
            <person name="Myers G.S."/>
            <person name="Heidelberg J.F."/>
            <person name="Badger J.H."/>
            <person name="Madupu R."/>
            <person name="Nelson W.C."/>
            <person name="Brinkac L.M."/>
            <person name="Dodson R.J."/>
            <person name="Durkin A.S."/>
            <person name="Daugherty S.C."/>
            <person name="Sullivan S.A."/>
            <person name="Khouri H."/>
            <person name="Mohamoud Y."/>
            <person name="Halpin R."/>
            <person name="Paulsen I.T."/>
        </authorList>
    </citation>
    <scope>NUCLEOTIDE SEQUENCE [LARGE SCALE GENOMIC DNA]</scope>
    <source>
        <strain>CC9311</strain>
    </source>
</reference>
<evidence type="ECO:0000255" key="1">
    <source>
        <dbReference type="HAMAP-Rule" id="MF_01393"/>
    </source>
</evidence>
<feature type="chain" id="PRO_0000362485" description="ATP synthase subunit a">
    <location>
        <begin position="1"/>
        <end position="241"/>
    </location>
</feature>
<feature type="transmembrane region" description="Helical" evidence="1">
    <location>
        <begin position="30"/>
        <end position="50"/>
    </location>
</feature>
<feature type="transmembrane region" description="Helical" evidence="1">
    <location>
        <begin position="89"/>
        <end position="109"/>
    </location>
</feature>
<feature type="transmembrane region" description="Helical" evidence="1">
    <location>
        <begin position="128"/>
        <end position="148"/>
    </location>
</feature>
<feature type="transmembrane region" description="Helical" evidence="1">
    <location>
        <begin position="193"/>
        <end position="213"/>
    </location>
</feature>
<feature type="transmembrane region" description="Helical" evidence="1">
    <location>
        <begin position="214"/>
        <end position="234"/>
    </location>
</feature>
<organism>
    <name type="scientific">Synechococcus sp. (strain CC9311)</name>
    <dbReference type="NCBI Taxonomy" id="64471"/>
    <lineage>
        <taxon>Bacteria</taxon>
        <taxon>Bacillati</taxon>
        <taxon>Cyanobacteriota</taxon>
        <taxon>Cyanophyceae</taxon>
        <taxon>Synechococcales</taxon>
        <taxon>Synechococcaceae</taxon>
        <taxon>Synechococcus</taxon>
    </lineage>
</organism>
<gene>
    <name evidence="1" type="primary">atpB</name>
    <name evidence="1" type="synonym">atpI</name>
    <name type="ordered locus">sync_2318</name>
</gene>
<proteinExistence type="inferred from homology"/>
<comment type="function">
    <text evidence="1">Key component of the proton channel; it plays a direct role in the translocation of protons across the membrane.</text>
</comment>
<comment type="subunit">
    <text evidence="1">F-type ATPases have 2 components, CF(1) - the catalytic core - and CF(0) - the membrane proton channel. CF(1) has five subunits: alpha(3), beta(3), gamma(1), delta(1), epsilon(1). CF(0) has four main subunits: a, b, b' and c.</text>
</comment>
<comment type="subcellular location">
    <subcellularLocation>
        <location evidence="1">Cellular thylakoid membrane</location>
        <topology evidence="1">Multi-pass membrane protein</topology>
    </subcellularLocation>
</comment>
<comment type="similarity">
    <text evidence="1">Belongs to the ATPase A chain family.</text>
</comment>
<protein>
    <recommendedName>
        <fullName evidence="1">ATP synthase subunit a</fullName>
    </recommendedName>
    <alternativeName>
        <fullName evidence="1">ATP synthase F0 sector subunit a</fullName>
    </alternativeName>
    <alternativeName>
        <fullName evidence="1">F-ATPase subunit 6</fullName>
    </alternativeName>
</protein>
<sequence length="241" mass="27070">MALLPFTLPLAELEVGHHLYWQIGNLNLHGQIFLSSWILIGALLAFVLVGTKNLSRDPKGAQNLLEFLWDYIRDLSRDQIGEKYYREWLPFIGTLFLFIFVSNWGGALIPWKVIELPEGELGAPTADINTTVAMALLVTLAYFYAGLSKKGWRFFELYVEPTPIMLPFKIIEEFTKPLSLSFRLFGNILADELAVGVLVYLVPLIVPLPVMLLGLFTSAIQALIFATLAAFYIGEGLHEAH</sequence>
<accession>Q0I7Q7</accession>
<name>ATP6_SYNS3</name>
<keyword id="KW-0066">ATP synthesis</keyword>
<keyword id="KW-0138">CF(0)</keyword>
<keyword id="KW-0375">Hydrogen ion transport</keyword>
<keyword id="KW-0406">Ion transport</keyword>
<keyword id="KW-0472">Membrane</keyword>
<keyword id="KW-1185">Reference proteome</keyword>
<keyword id="KW-0793">Thylakoid</keyword>
<keyword id="KW-0812">Transmembrane</keyword>
<keyword id="KW-1133">Transmembrane helix</keyword>
<keyword id="KW-0813">Transport</keyword>
<dbReference type="EMBL" id="CP000435">
    <property type="protein sequence ID" value="ABI46814.1"/>
    <property type="molecule type" value="Genomic_DNA"/>
</dbReference>
<dbReference type="RefSeq" id="WP_011620226.1">
    <property type="nucleotide sequence ID" value="NC_008319.1"/>
</dbReference>
<dbReference type="SMR" id="Q0I7Q7"/>
<dbReference type="STRING" id="64471.sync_2318"/>
<dbReference type="KEGG" id="syg:sync_2318"/>
<dbReference type="eggNOG" id="COG0356">
    <property type="taxonomic scope" value="Bacteria"/>
</dbReference>
<dbReference type="HOGENOM" id="CLU_041018_2_4_3"/>
<dbReference type="OrthoDB" id="9789241at2"/>
<dbReference type="Proteomes" id="UP000001961">
    <property type="component" value="Chromosome"/>
</dbReference>
<dbReference type="GO" id="GO:0031676">
    <property type="term" value="C:plasma membrane-derived thylakoid membrane"/>
    <property type="evidence" value="ECO:0007669"/>
    <property type="project" value="UniProtKB-SubCell"/>
</dbReference>
<dbReference type="GO" id="GO:0045259">
    <property type="term" value="C:proton-transporting ATP synthase complex"/>
    <property type="evidence" value="ECO:0007669"/>
    <property type="project" value="UniProtKB-KW"/>
</dbReference>
<dbReference type="GO" id="GO:0046933">
    <property type="term" value="F:proton-transporting ATP synthase activity, rotational mechanism"/>
    <property type="evidence" value="ECO:0007669"/>
    <property type="project" value="UniProtKB-UniRule"/>
</dbReference>
<dbReference type="CDD" id="cd00310">
    <property type="entry name" value="ATP-synt_Fo_a_6"/>
    <property type="match status" value="1"/>
</dbReference>
<dbReference type="FunFam" id="1.20.120.220:FF:000001">
    <property type="entry name" value="ATP synthase subunit a, chloroplastic"/>
    <property type="match status" value="1"/>
</dbReference>
<dbReference type="Gene3D" id="1.20.120.220">
    <property type="entry name" value="ATP synthase, F0 complex, subunit A"/>
    <property type="match status" value="1"/>
</dbReference>
<dbReference type="HAMAP" id="MF_01393">
    <property type="entry name" value="ATP_synth_a_bact"/>
    <property type="match status" value="1"/>
</dbReference>
<dbReference type="InterPro" id="IPR045082">
    <property type="entry name" value="ATP_syn_F0_a_bact/chloroplast"/>
</dbReference>
<dbReference type="InterPro" id="IPR000568">
    <property type="entry name" value="ATP_synth_F0_asu"/>
</dbReference>
<dbReference type="InterPro" id="IPR023011">
    <property type="entry name" value="ATP_synth_F0_asu_AS"/>
</dbReference>
<dbReference type="InterPro" id="IPR035908">
    <property type="entry name" value="F0_ATP_A_sf"/>
</dbReference>
<dbReference type="NCBIfam" id="TIGR01131">
    <property type="entry name" value="ATP_synt_6_or_A"/>
    <property type="match status" value="1"/>
</dbReference>
<dbReference type="PANTHER" id="PTHR42823">
    <property type="entry name" value="ATP SYNTHASE SUBUNIT A, CHLOROPLASTIC"/>
    <property type="match status" value="1"/>
</dbReference>
<dbReference type="PANTHER" id="PTHR42823:SF3">
    <property type="entry name" value="ATP SYNTHASE SUBUNIT A, CHLOROPLASTIC"/>
    <property type="match status" value="1"/>
</dbReference>
<dbReference type="Pfam" id="PF00119">
    <property type="entry name" value="ATP-synt_A"/>
    <property type="match status" value="1"/>
</dbReference>
<dbReference type="PRINTS" id="PR00123">
    <property type="entry name" value="ATPASEA"/>
</dbReference>
<dbReference type="SUPFAM" id="SSF81336">
    <property type="entry name" value="F1F0 ATP synthase subunit A"/>
    <property type="match status" value="1"/>
</dbReference>
<dbReference type="PROSITE" id="PS00449">
    <property type="entry name" value="ATPASE_A"/>
    <property type="match status" value="1"/>
</dbReference>